<gene>
    <name type="primary">AIM44</name>
    <name type="ordered locus">YPL158C</name>
    <name type="ORF">P2570</name>
</gene>
<comment type="interaction">
    <interactant intactId="EBI-29423">
        <id>Q99299</id>
    </interactant>
    <interactant intactId="EBI-4274">
        <id>P19073</id>
        <label>CDC42</label>
    </interactant>
    <organismsDiffer>false</organismsDiffer>
    <experiments>4</experiments>
</comment>
<comment type="interaction">
    <interactant intactId="EBI-29423">
        <id>Q99299</id>
    </interactant>
    <interactant intactId="EBI-11850">
        <id>P25293</id>
        <label>NAP1</label>
    </interactant>
    <organismsDiffer>false</organismsDiffer>
    <experiments>5</experiments>
</comment>
<comment type="interaction">
    <interactant intactId="EBI-29423">
        <id>Q99299</id>
    </interactant>
    <interactant intactId="EBI-36841">
        <id>Q08229</id>
        <label>NBA1</label>
    </interactant>
    <organismsDiffer>false</organismsDiffer>
    <experiments>6</experiments>
</comment>
<comment type="interaction">
    <interactant intactId="EBI-29423">
        <id>Q99299</id>
    </interactant>
    <interactant intactId="EBI-28760">
        <id>P53939</id>
        <label>NIS1</label>
    </interactant>
    <organismsDiffer>false</organismsDiffer>
    <experiments>5</experiments>
</comment>
<comment type="interaction">
    <interactant intactId="EBI-29423">
        <id>Q99299</id>
    </interactant>
    <interactant intactId="EBI-15121">
        <id>P06780</id>
        <label>RHO1</label>
    </interactant>
    <organismsDiffer>false</organismsDiffer>
    <experiments>3</experiments>
</comment>
<comment type="subcellular location">
    <subcellularLocation>
        <location evidence="4">Bud neck</location>
    </subcellularLocation>
</comment>
<comment type="induction">
    <text evidence="3">Expression is controlled by SWI5.</text>
</comment>
<comment type="disruption phenotype">
    <text evidence="6">Increases frequency of mitochondrial genome loss.</text>
</comment>
<comment type="miscellaneous">
    <text evidence="5">Present with 238 molecules/cell in log phase SD medium.</text>
</comment>
<comment type="similarity">
    <text evidence="7">Belongs to the AIM44 family.</text>
</comment>
<evidence type="ECO:0000255" key="1"/>
<evidence type="ECO:0000256" key="2">
    <source>
        <dbReference type="SAM" id="MobiDB-lite"/>
    </source>
</evidence>
<evidence type="ECO:0000269" key="3">
    <source>
    </source>
</evidence>
<evidence type="ECO:0000269" key="4">
    <source>
    </source>
</evidence>
<evidence type="ECO:0000269" key="5">
    <source>
    </source>
</evidence>
<evidence type="ECO:0000269" key="6">
    <source>
    </source>
</evidence>
<evidence type="ECO:0000305" key="7"/>
<evidence type="ECO:0007744" key="8">
    <source>
    </source>
</evidence>
<protein>
    <recommendedName>
        <fullName>Altered inheritance of mitochondria protein 44</fullName>
    </recommendedName>
</protein>
<reference key="1">
    <citation type="journal article" date="1996" name="Yeast">
        <title>The sequence of 55 kb on the left arm of yeast chromosome XVI identifies a small nuclear RNA, a new putative protein kinase and two new putative regulators.</title>
        <authorList>
            <person name="Purnelle B."/>
            <person name="Coster F."/>
            <person name="Goffeau A."/>
        </authorList>
    </citation>
    <scope>NUCLEOTIDE SEQUENCE [GENOMIC DNA]</scope>
    <source>
        <strain>ATCC 204511 / S288c / AB972</strain>
    </source>
</reference>
<reference key="2">
    <citation type="journal article" date="1997" name="Nature">
        <title>The nucleotide sequence of Saccharomyces cerevisiae chromosome XVI.</title>
        <authorList>
            <person name="Bussey H."/>
            <person name="Storms R.K."/>
            <person name="Ahmed A."/>
            <person name="Albermann K."/>
            <person name="Allen E."/>
            <person name="Ansorge W."/>
            <person name="Araujo R."/>
            <person name="Aparicio A."/>
            <person name="Barrell B.G."/>
            <person name="Badcock K."/>
            <person name="Benes V."/>
            <person name="Botstein D."/>
            <person name="Bowman S."/>
            <person name="Brueckner M."/>
            <person name="Carpenter J."/>
            <person name="Cherry J.M."/>
            <person name="Chung E."/>
            <person name="Churcher C.M."/>
            <person name="Coster F."/>
            <person name="Davis K."/>
            <person name="Davis R.W."/>
            <person name="Dietrich F.S."/>
            <person name="Delius H."/>
            <person name="DiPaolo T."/>
            <person name="Dubois E."/>
            <person name="Duesterhoeft A."/>
            <person name="Duncan M."/>
            <person name="Floeth M."/>
            <person name="Fortin N."/>
            <person name="Friesen J.D."/>
            <person name="Fritz C."/>
            <person name="Goffeau A."/>
            <person name="Hall J."/>
            <person name="Hebling U."/>
            <person name="Heumann K."/>
            <person name="Hilbert H."/>
            <person name="Hillier L.W."/>
            <person name="Hunicke-Smith S."/>
            <person name="Hyman R.W."/>
            <person name="Johnston M."/>
            <person name="Kalman S."/>
            <person name="Kleine K."/>
            <person name="Komp C."/>
            <person name="Kurdi O."/>
            <person name="Lashkari D."/>
            <person name="Lew H."/>
            <person name="Lin A."/>
            <person name="Lin D."/>
            <person name="Louis E.J."/>
            <person name="Marathe R."/>
            <person name="Messenguy F."/>
            <person name="Mewes H.-W."/>
            <person name="Mirtipati S."/>
            <person name="Moestl D."/>
            <person name="Mueller-Auer S."/>
            <person name="Namath A."/>
            <person name="Nentwich U."/>
            <person name="Oefner P."/>
            <person name="Pearson D."/>
            <person name="Petel F.X."/>
            <person name="Pohl T.M."/>
            <person name="Purnelle B."/>
            <person name="Rajandream M.A."/>
            <person name="Rechmann S."/>
            <person name="Rieger M."/>
            <person name="Riles L."/>
            <person name="Roberts D."/>
            <person name="Schaefer M."/>
            <person name="Scharfe M."/>
            <person name="Scherens B."/>
            <person name="Schramm S."/>
            <person name="Schroeder M."/>
            <person name="Sdicu A.-M."/>
            <person name="Tettelin H."/>
            <person name="Urrestarazu L.A."/>
            <person name="Ushinsky S."/>
            <person name="Vierendeels F."/>
            <person name="Vissers S."/>
            <person name="Voss H."/>
            <person name="Walsh S.V."/>
            <person name="Wambutt R."/>
            <person name="Wang Y."/>
            <person name="Wedler E."/>
            <person name="Wedler H."/>
            <person name="Winnett E."/>
            <person name="Zhong W.-W."/>
            <person name="Zollner A."/>
            <person name="Vo D.H."/>
            <person name="Hani J."/>
        </authorList>
    </citation>
    <scope>NUCLEOTIDE SEQUENCE [LARGE SCALE GENOMIC DNA]</scope>
    <source>
        <strain>ATCC 204508 / S288c</strain>
    </source>
</reference>
<reference key="3">
    <citation type="journal article" date="2014" name="G3 (Bethesda)">
        <title>The reference genome sequence of Saccharomyces cerevisiae: Then and now.</title>
        <authorList>
            <person name="Engel S.R."/>
            <person name="Dietrich F.S."/>
            <person name="Fisk D.G."/>
            <person name="Binkley G."/>
            <person name="Balakrishnan R."/>
            <person name="Costanzo M.C."/>
            <person name="Dwight S.S."/>
            <person name="Hitz B.C."/>
            <person name="Karra K."/>
            <person name="Nash R.S."/>
            <person name="Weng S."/>
            <person name="Wong E.D."/>
            <person name="Lloyd P."/>
            <person name="Skrzypek M.S."/>
            <person name="Miyasato S.R."/>
            <person name="Simison M."/>
            <person name="Cherry J.M."/>
        </authorList>
    </citation>
    <scope>GENOME REANNOTATION</scope>
    <source>
        <strain>ATCC 204508 / S288c</strain>
    </source>
</reference>
<reference key="4">
    <citation type="journal article" date="2001" name="Mol. Microbiol.">
        <title>Overlapping and distinct roles of the duplicated yeast transcription factors Ace2p and Swi5p.</title>
        <authorList>
            <person name="Doolin M.-T."/>
            <person name="Johnson A.L."/>
            <person name="Johnston L.H."/>
            <person name="Butler G."/>
        </authorList>
    </citation>
    <scope>INDUCTION</scope>
</reference>
<reference key="5">
    <citation type="journal article" date="2003" name="Nature">
        <title>Global analysis of protein localization in budding yeast.</title>
        <authorList>
            <person name="Huh W.-K."/>
            <person name="Falvo J.V."/>
            <person name="Gerke L.C."/>
            <person name="Carroll A.S."/>
            <person name="Howson R.W."/>
            <person name="Weissman J.S."/>
            <person name="O'Shea E.K."/>
        </authorList>
    </citation>
    <scope>SUBCELLULAR LOCATION [LARGE SCALE ANALYSIS]</scope>
</reference>
<reference key="6">
    <citation type="journal article" date="2003" name="Nature">
        <title>Global analysis of protein expression in yeast.</title>
        <authorList>
            <person name="Ghaemmaghami S."/>
            <person name="Huh W.-K."/>
            <person name="Bower K."/>
            <person name="Howson R.W."/>
            <person name="Belle A."/>
            <person name="Dephoure N."/>
            <person name="O'Shea E.K."/>
            <person name="Weissman J.S."/>
        </authorList>
    </citation>
    <scope>LEVEL OF PROTEIN EXPRESSION [LARGE SCALE ANALYSIS]</scope>
</reference>
<reference key="7">
    <citation type="journal article" date="2009" name="PLoS Genet.">
        <title>Computationally driven, quantitative experiments discover genes required for mitochondrial biogenesis.</title>
        <authorList>
            <person name="Hess D.C."/>
            <person name="Myers C.L."/>
            <person name="Huttenhower C."/>
            <person name="Hibbs M.A."/>
            <person name="Hayes A.P."/>
            <person name="Paw J."/>
            <person name="Clore J.J."/>
            <person name="Mendoza R.M."/>
            <person name="Luis B.S."/>
            <person name="Nislow C."/>
            <person name="Giaever G."/>
            <person name="Costanzo M."/>
            <person name="Troyanskaya O.G."/>
            <person name="Caudy A.A."/>
        </authorList>
    </citation>
    <scope>DISRUPTION PHENOTYPE</scope>
</reference>
<reference key="8">
    <citation type="journal article" date="2009" name="Science">
        <title>Global analysis of Cdk1 substrate phosphorylation sites provides insights into evolution.</title>
        <authorList>
            <person name="Holt L.J."/>
            <person name="Tuch B.B."/>
            <person name="Villen J."/>
            <person name="Johnson A.D."/>
            <person name="Gygi S.P."/>
            <person name="Morgan D.O."/>
        </authorList>
    </citation>
    <scope>PHOSPHORYLATION [LARGE SCALE ANALYSIS] AT SER-25</scope>
    <scope>IDENTIFICATION BY MASS SPECTROMETRY [LARGE SCALE ANALYSIS]</scope>
</reference>
<feature type="chain" id="PRO_0000203491" description="Altered inheritance of mitochondria protein 44">
    <location>
        <begin position="1"/>
        <end position="758"/>
    </location>
</feature>
<feature type="region of interest" description="Disordered" evidence="2">
    <location>
        <begin position="55"/>
        <end position="77"/>
    </location>
</feature>
<feature type="region of interest" description="Disordered" evidence="2">
    <location>
        <begin position="314"/>
        <end position="414"/>
    </location>
</feature>
<feature type="region of interest" description="Disordered" evidence="2">
    <location>
        <begin position="636"/>
        <end position="702"/>
    </location>
</feature>
<feature type="coiled-coil region" evidence="1">
    <location>
        <begin position="648"/>
        <end position="711"/>
    </location>
</feature>
<feature type="compositionally biased region" description="Low complexity" evidence="2">
    <location>
        <begin position="315"/>
        <end position="330"/>
    </location>
</feature>
<feature type="compositionally biased region" description="Polar residues" evidence="2">
    <location>
        <begin position="338"/>
        <end position="348"/>
    </location>
</feature>
<feature type="compositionally biased region" description="Polar residues" evidence="2">
    <location>
        <begin position="355"/>
        <end position="368"/>
    </location>
</feature>
<feature type="compositionally biased region" description="Polar residues" evidence="2">
    <location>
        <begin position="400"/>
        <end position="414"/>
    </location>
</feature>
<feature type="compositionally biased region" description="Acidic residues" evidence="2">
    <location>
        <begin position="651"/>
        <end position="689"/>
    </location>
</feature>
<feature type="compositionally biased region" description="Basic and acidic residues" evidence="2">
    <location>
        <begin position="690"/>
        <end position="702"/>
    </location>
</feature>
<feature type="modified residue" description="Phosphoserine" evidence="8">
    <location>
        <position position="25"/>
    </location>
</feature>
<proteinExistence type="evidence at protein level"/>
<sequence>MIIRAPIRTKTKSFRGDQMDFKFPSNESLPRGTLEEYHLNNHHLLNDVFAAENGVSRDEDGNSQTLSDYTSTSNTNTNSGYSSNGYYSFANISDNTTSSPRIVINQNETARLTSSDSNKSDFFASHDFPGNDSLHYSSSNVVKNQLHSMEAIPEGNITGSISTAFQTIPTADNVSYDIAPSSASSLLPRKSTSKSAILPSTQEAKPMTKLNMEKDIKTIELNNSVVPKPKKKLNRVPTIRRVESSRFSNSRYSSSVSSKSSSSRCSLKRSKAIRCKGGLLYYFTSLGIKIKKKLRKLRLVLRRRLFSYNVQKVPSATNSKTTKSKANINNKSKKRGTNLVNKNSNSTPRQKKSQRYVSNLQRSISSKSLVPVLAPQKKTKPLTVDTKFKANHPQSEDSKVGSNTPRSPLVSYTPSLRRTNSSIRRAASILTASATMTPANNKNSFISVPDNVSHAVTRNSSMYSRSRLVRSKPSTALNAIARQPSIVVENKVIPLSMNRYSIKEEDEYVIDTSSMRELSPVNSVCSSDYDRESSESYSNYADAMETTEVDNKDRVECNNEIQNVDANNEETSNEESYNLMKHYLSTVIAQRIMLRVQIARIQNYKSNVVYMNKSAETNSTIYEDLVDSLLTEYEADGSSSQIFDGVTVRADEEEEEDEDDEDDEEEEEENDDEEDEEDEEDDEDDEEEEEKRKEGEGRNLAKEVDELAELSPMRKQSDLSITLRSPFAMLNPAYSNSIISLPTGVVKRSLTLPVGMKI</sequence>
<dbReference type="EMBL" id="X96770">
    <property type="protein sequence ID" value="CAA65563.1"/>
    <property type="molecule type" value="Genomic_DNA"/>
</dbReference>
<dbReference type="EMBL" id="Z73514">
    <property type="protein sequence ID" value="CAA97863.1"/>
    <property type="molecule type" value="Genomic_DNA"/>
</dbReference>
<dbReference type="EMBL" id="BK006949">
    <property type="protein sequence ID" value="DAA11276.1"/>
    <property type="molecule type" value="Genomic_DNA"/>
</dbReference>
<dbReference type="PIR" id="S65169">
    <property type="entry name" value="S65169"/>
</dbReference>
<dbReference type="RefSeq" id="NP_015167.1">
    <property type="nucleotide sequence ID" value="NM_001183972.1"/>
</dbReference>
<dbReference type="SMR" id="Q99299"/>
<dbReference type="BioGRID" id="36025">
    <property type="interactions" value="507"/>
</dbReference>
<dbReference type="DIP" id="DIP-3992N"/>
<dbReference type="FunCoup" id="Q99299">
    <property type="interactions" value="56"/>
</dbReference>
<dbReference type="IntAct" id="Q99299">
    <property type="interactions" value="14"/>
</dbReference>
<dbReference type="MINT" id="Q99299"/>
<dbReference type="STRING" id="4932.YPL158C"/>
<dbReference type="iPTMnet" id="Q99299"/>
<dbReference type="PaxDb" id="4932-YPL158C"/>
<dbReference type="PeptideAtlas" id="Q99299"/>
<dbReference type="EnsemblFungi" id="YPL158C_mRNA">
    <property type="protein sequence ID" value="YPL158C"/>
    <property type="gene ID" value="YPL158C"/>
</dbReference>
<dbReference type="GeneID" id="855945"/>
<dbReference type="KEGG" id="sce:YPL158C"/>
<dbReference type="AGR" id="SGD:S000006079"/>
<dbReference type="SGD" id="S000006079">
    <property type="gene designation" value="AIM44"/>
</dbReference>
<dbReference type="VEuPathDB" id="FungiDB:YPL158C"/>
<dbReference type="eggNOG" id="ENOG502R02U">
    <property type="taxonomic scope" value="Eukaryota"/>
</dbReference>
<dbReference type="HOGENOM" id="CLU_385965_0_0_1"/>
<dbReference type="InParanoid" id="Q99299"/>
<dbReference type="OMA" id="MDFKFPS"/>
<dbReference type="OrthoDB" id="4065285at2759"/>
<dbReference type="BioCyc" id="YEAST:G3O-34054-MONOMER"/>
<dbReference type="BioGRID-ORCS" id="855945">
    <property type="hits" value="0 hits in 10 CRISPR screens"/>
</dbReference>
<dbReference type="PRO" id="PR:Q99299"/>
<dbReference type="Proteomes" id="UP000002311">
    <property type="component" value="Chromosome XVI"/>
</dbReference>
<dbReference type="RNAct" id="Q99299">
    <property type="molecule type" value="protein"/>
</dbReference>
<dbReference type="GO" id="GO:0032153">
    <property type="term" value="C:cell division site"/>
    <property type="evidence" value="ECO:0000314"/>
    <property type="project" value="SGD"/>
</dbReference>
<dbReference type="GO" id="GO:0005935">
    <property type="term" value="C:cellular bud neck"/>
    <property type="evidence" value="ECO:0000314"/>
    <property type="project" value="SGD"/>
</dbReference>
<dbReference type="GO" id="GO:0032174">
    <property type="term" value="C:cellular bud neck septin collar"/>
    <property type="evidence" value="ECO:0000314"/>
    <property type="project" value="SGD"/>
</dbReference>
<dbReference type="GO" id="GO:0032177">
    <property type="term" value="C:cellular bud neck split septin rings"/>
    <property type="evidence" value="ECO:0000314"/>
    <property type="project" value="SGD"/>
</dbReference>
<dbReference type="GO" id="GO:0005934">
    <property type="term" value="C:cellular bud tip"/>
    <property type="evidence" value="ECO:0007005"/>
    <property type="project" value="SGD"/>
</dbReference>
<dbReference type="GO" id="GO:0005637">
    <property type="term" value="C:nuclear inner membrane"/>
    <property type="evidence" value="ECO:0000315"/>
    <property type="project" value="SGD"/>
</dbReference>
<dbReference type="GO" id="GO:0005886">
    <property type="term" value="C:plasma membrane"/>
    <property type="evidence" value="ECO:0000314"/>
    <property type="project" value="SGD"/>
</dbReference>
<dbReference type="GO" id="GO:0045185">
    <property type="term" value="P:maintenance of protein location"/>
    <property type="evidence" value="ECO:0000315"/>
    <property type="project" value="SGD"/>
</dbReference>
<dbReference type="GO" id="GO:1903473">
    <property type="term" value="P:positive regulation of mitotic actomyosin contractile ring contraction"/>
    <property type="evidence" value="ECO:0000315"/>
    <property type="project" value="SGD"/>
</dbReference>
<dbReference type="GO" id="GO:0098841">
    <property type="term" value="P:protein localization to cell division site after cytokinesis"/>
    <property type="evidence" value="ECO:0000315"/>
    <property type="project" value="SGD"/>
</dbReference>
<dbReference type="GO" id="GO:1901900">
    <property type="term" value="P:regulation of protein localization to cell division site"/>
    <property type="evidence" value="ECO:0000315"/>
    <property type="project" value="SGD"/>
</dbReference>
<dbReference type="GO" id="GO:1990344">
    <property type="term" value="P:secondary cell septum biogenesis"/>
    <property type="evidence" value="ECO:0000315"/>
    <property type="project" value="SGD"/>
</dbReference>
<organism>
    <name type="scientific">Saccharomyces cerevisiae (strain ATCC 204508 / S288c)</name>
    <name type="common">Baker's yeast</name>
    <dbReference type="NCBI Taxonomy" id="559292"/>
    <lineage>
        <taxon>Eukaryota</taxon>
        <taxon>Fungi</taxon>
        <taxon>Dikarya</taxon>
        <taxon>Ascomycota</taxon>
        <taxon>Saccharomycotina</taxon>
        <taxon>Saccharomycetes</taxon>
        <taxon>Saccharomycetales</taxon>
        <taxon>Saccharomycetaceae</taxon>
        <taxon>Saccharomyces</taxon>
    </lineage>
</organism>
<accession>Q99299</accession>
<accession>D6W3L0</accession>
<keyword id="KW-0175">Coiled coil</keyword>
<keyword id="KW-0597">Phosphoprotein</keyword>
<keyword id="KW-1185">Reference proteome</keyword>
<name>AIM44_YEAST</name>